<comment type="function">
    <text evidence="1">Required for maturation of urease via the functional incorporation of the urease nickel metallocenter.</text>
</comment>
<comment type="subunit">
    <text evidence="1">UreD, UreF and UreG form a complex that acts as a GTP-hydrolysis-dependent molecular chaperone, activating the urease apoprotein by helping to assemble the nickel containing metallocenter of UreC. The UreE protein probably delivers the nickel.</text>
</comment>
<comment type="subcellular location">
    <subcellularLocation>
        <location evidence="1">Cytoplasm</location>
    </subcellularLocation>
</comment>
<comment type="similarity">
    <text evidence="1">Belongs to the UreF family.</text>
</comment>
<keyword id="KW-0143">Chaperone</keyword>
<keyword id="KW-0963">Cytoplasm</keyword>
<keyword id="KW-0996">Nickel insertion</keyword>
<keyword id="KW-1185">Reference proteome</keyword>
<protein>
    <recommendedName>
        <fullName evidence="1">Urease accessory protein UreF 2</fullName>
    </recommendedName>
</protein>
<accession>A9M616</accession>
<dbReference type="EMBL" id="CP000872">
    <property type="protein sequence ID" value="ABX62421.1"/>
    <property type="molecule type" value="Genomic_DNA"/>
</dbReference>
<dbReference type="RefSeq" id="WP_002966883.1">
    <property type="nucleotide sequence ID" value="NC_010103.1"/>
</dbReference>
<dbReference type="SMR" id="A9M616"/>
<dbReference type="KEGG" id="bcs:BCAN_A1387"/>
<dbReference type="HOGENOM" id="CLU_049215_4_0_5"/>
<dbReference type="PhylomeDB" id="A9M616"/>
<dbReference type="Proteomes" id="UP000001385">
    <property type="component" value="Chromosome I"/>
</dbReference>
<dbReference type="GO" id="GO:0005737">
    <property type="term" value="C:cytoplasm"/>
    <property type="evidence" value="ECO:0007669"/>
    <property type="project" value="UniProtKB-SubCell"/>
</dbReference>
<dbReference type="GO" id="GO:0016151">
    <property type="term" value="F:nickel cation binding"/>
    <property type="evidence" value="ECO:0007669"/>
    <property type="project" value="UniProtKB-UniRule"/>
</dbReference>
<dbReference type="Gene3D" id="1.10.4190.10">
    <property type="entry name" value="Urease accessory protein UreF"/>
    <property type="match status" value="1"/>
</dbReference>
<dbReference type="HAMAP" id="MF_01385">
    <property type="entry name" value="UreF"/>
    <property type="match status" value="1"/>
</dbReference>
<dbReference type="InterPro" id="IPR002639">
    <property type="entry name" value="UreF"/>
</dbReference>
<dbReference type="InterPro" id="IPR038277">
    <property type="entry name" value="UreF_sf"/>
</dbReference>
<dbReference type="PANTHER" id="PTHR33620">
    <property type="entry name" value="UREASE ACCESSORY PROTEIN F"/>
    <property type="match status" value="1"/>
</dbReference>
<dbReference type="PANTHER" id="PTHR33620:SF1">
    <property type="entry name" value="UREASE ACCESSORY PROTEIN F"/>
    <property type="match status" value="1"/>
</dbReference>
<dbReference type="Pfam" id="PF01730">
    <property type="entry name" value="UreF"/>
    <property type="match status" value="1"/>
</dbReference>
<dbReference type="PIRSF" id="PIRSF009467">
    <property type="entry name" value="Ureas_acces_UreF"/>
    <property type="match status" value="1"/>
</dbReference>
<sequence>MTMRTATITEFSSSYRSLPGLLHLLQFGDSALPIGGFSFSNGLESAIQQNLVHDKETLREFTLTAMNQAATSDGIALLTAHRAARADDRGALQVIDKAVFERKLNEETRLMTVRMGRKLCELSASIIDDRLNRDWLECIKTAETPGTHPVSLGLAFAALDVDGRDAFGAQQYGVATTILGAALRLMRVSFMDTQKILLEATSTVAPAYEEIADAGIEDMASFAPMVDILAAVHVKGHVRMFMN</sequence>
<reference key="1">
    <citation type="submission" date="2007-10" db="EMBL/GenBank/DDBJ databases">
        <title>Brucella canis ATCC 23365 whole genome shotgun sequencing project.</title>
        <authorList>
            <person name="Setubal J.C."/>
            <person name="Bowns C."/>
            <person name="Boyle S."/>
            <person name="Crasta O.R."/>
            <person name="Czar M.J."/>
            <person name="Dharmanolla C."/>
            <person name="Gillespie J.J."/>
            <person name="Kenyon R.W."/>
            <person name="Lu J."/>
            <person name="Mane S."/>
            <person name="Mohapatra S."/>
            <person name="Nagrani S."/>
            <person name="Purkayastha A."/>
            <person name="Rajasimha H.K."/>
            <person name="Shallom J.M."/>
            <person name="Shallom S."/>
            <person name="Shukla M."/>
            <person name="Snyder E.E."/>
            <person name="Sobral B.W."/>
            <person name="Wattam A.R."/>
            <person name="Will R."/>
            <person name="Williams K."/>
            <person name="Yoo H."/>
            <person name="Bruce D."/>
            <person name="Detter C."/>
            <person name="Munk C."/>
            <person name="Brettin T.S."/>
        </authorList>
    </citation>
    <scope>NUCLEOTIDE SEQUENCE [LARGE SCALE GENOMIC DNA]</scope>
    <source>
        <strain>ATCC 23365 / NCTC 10854 / RM-666</strain>
    </source>
</reference>
<proteinExistence type="inferred from homology"/>
<name>UREF2_BRUC2</name>
<organism>
    <name type="scientific">Brucella canis (strain ATCC 23365 / NCTC 10854 / RM-666)</name>
    <dbReference type="NCBI Taxonomy" id="483179"/>
    <lineage>
        <taxon>Bacteria</taxon>
        <taxon>Pseudomonadati</taxon>
        <taxon>Pseudomonadota</taxon>
        <taxon>Alphaproteobacteria</taxon>
        <taxon>Hyphomicrobiales</taxon>
        <taxon>Brucellaceae</taxon>
        <taxon>Brucella/Ochrobactrum group</taxon>
        <taxon>Brucella</taxon>
    </lineage>
</organism>
<evidence type="ECO:0000255" key="1">
    <source>
        <dbReference type="HAMAP-Rule" id="MF_01385"/>
    </source>
</evidence>
<gene>
    <name evidence="1" type="primary">ureF2</name>
    <name type="ordered locus">BCAN_A1387</name>
</gene>
<feature type="chain" id="PRO_0000344088" description="Urease accessory protein UreF 2">
    <location>
        <begin position="1"/>
        <end position="243"/>
    </location>
</feature>